<sequence length="557" mass="62040">MSLRLLIPLLFLPGLALADHRPCPDWPAQRARAEVSQLLKTLSHWDDHYHRQGVALVADELYDQSRQHLRHLQGCFDLASNDAPLATARGQVPHPVPHTGVDKLRDEPAVQRWLQGRQGMWIQPKVDGVAVSLVYQQGQLTQLLSRGDGVLGHDWSRHIPQLGRIVRQLPQPLDTVFQGELYWRLADHVQAEAGSANARGIVAGLLARKQLSDEQGSGIGLFVWDWPAGPGSQAERLAQLTALGFIDSQRFSVAIEGFDAAAHWRQHWYRTALPFATDGVILRQDARPPAQRWRAQAPYWIAAWKYPFSQALAQVRDIHFRIGRTGRITPLLQLEPIQLDDRRISQVSLGSLARWTQLDIRPGDQVAVSLAGLTIPRVESVVHRSPLRAPVLVPDPADHHLLSCWQASPACQEQFLARLAWLGGNKGLDMAGVGSGVWHQLVESGKVATLSDWLELTREDLLEVPGIAQARAERLLQAFSLGRRQPFERWLRGLGLPAPSHFSPGADWSALASRNIEQWLAEPGVGAVRAAQLQAFLSHEQVQALARRLRAHEIEGF</sequence>
<protein>
    <recommendedName>
        <fullName evidence="1">DNA ligase B</fullName>
        <ecNumber evidence="1">6.5.1.2</ecNumber>
    </recommendedName>
    <alternativeName>
        <fullName evidence="1">Polydeoxyribonucleotide synthase [NAD(+)] B</fullName>
    </alternativeName>
</protein>
<gene>
    <name evidence="1" type="primary">ligB</name>
    <name type="ordered locus">PSEEN5027</name>
</gene>
<comment type="function">
    <text evidence="1">Catalyzes the formation of phosphodiester linkages between 5'-phosphoryl and 3'-hydroxyl groups in double-stranded DNA using NAD as a coenzyme and as the energy source for the reaction.</text>
</comment>
<comment type="catalytic activity">
    <reaction evidence="1">
        <text>NAD(+) + (deoxyribonucleotide)n-3'-hydroxyl + 5'-phospho-(deoxyribonucleotide)m = (deoxyribonucleotide)n+m + AMP + beta-nicotinamide D-nucleotide.</text>
        <dbReference type="EC" id="6.5.1.2"/>
    </reaction>
</comment>
<comment type="similarity">
    <text evidence="1">Belongs to the NAD-dependent DNA ligase family. LigB subfamily.</text>
</comment>
<organism>
    <name type="scientific">Pseudomonas entomophila (strain L48)</name>
    <dbReference type="NCBI Taxonomy" id="384676"/>
    <lineage>
        <taxon>Bacteria</taxon>
        <taxon>Pseudomonadati</taxon>
        <taxon>Pseudomonadota</taxon>
        <taxon>Gammaproteobacteria</taxon>
        <taxon>Pseudomonadales</taxon>
        <taxon>Pseudomonadaceae</taxon>
        <taxon>Pseudomonas</taxon>
    </lineage>
</organism>
<evidence type="ECO:0000255" key="1">
    <source>
        <dbReference type="HAMAP-Rule" id="MF_01587"/>
    </source>
</evidence>
<name>LIGB_PSEE4</name>
<keyword id="KW-0227">DNA damage</keyword>
<keyword id="KW-0234">DNA repair</keyword>
<keyword id="KW-0235">DNA replication</keyword>
<keyword id="KW-0436">Ligase</keyword>
<keyword id="KW-0520">NAD</keyword>
<dbReference type="EC" id="6.5.1.2" evidence="1"/>
<dbReference type="EMBL" id="CT573326">
    <property type="protein sequence ID" value="CAK17661.1"/>
    <property type="molecule type" value="Genomic_DNA"/>
</dbReference>
<dbReference type="RefSeq" id="WP_011536021.1">
    <property type="nucleotide sequence ID" value="NC_008027.1"/>
</dbReference>
<dbReference type="SMR" id="Q1I3X5"/>
<dbReference type="STRING" id="384676.PSEEN5027"/>
<dbReference type="GeneID" id="32807966"/>
<dbReference type="KEGG" id="pen:PSEEN5027"/>
<dbReference type="eggNOG" id="COG0272">
    <property type="taxonomic scope" value="Bacteria"/>
</dbReference>
<dbReference type="HOGENOM" id="CLU_489786_0_0_6"/>
<dbReference type="OrthoDB" id="9759736at2"/>
<dbReference type="Proteomes" id="UP000000658">
    <property type="component" value="Chromosome"/>
</dbReference>
<dbReference type="GO" id="GO:0003911">
    <property type="term" value="F:DNA ligase (NAD+) activity"/>
    <property type="evidence" value="ECO:0007669"/>
    <property type="project" value="UniProtKB-UniRule"/>
</dbReference>
<dbReference type="GO" id="GO:0006281">
    <property type="term" value="P:DNA repair"/>
    <property type="evidence" value="ECO:0007669"/>
    <property type="project" value="UniProtKB-KW"/>
</dbReference>
<dbReference type="GO" id="GO:0006260">
    <property type="term" value="P:DNA replication"/>
    <property type="evidence" value="ECO:0007669"/>
    <property type="project" value="UniProtKB-KW"/>
</dbReference>
<dbReference type="Gene3D" id="1.10.150.20">
    <property type="entry name" value="5' to 3' exonuclease, C-terminal subdomain"/>
    <property type="match status" value="1"/>
</dbReference>
<dbReference type="Gene3D" id="3.30.470.30">
    <property type="entry name" value="DNA ligase/mRNA capping enzyme"/>
    <property type="match status" value="1"/>
</dbReference>
<dbReference type="Gene3D" id="1.10.287.610">
    <property type="entry name" value="Helix hairpin bin"/>
    <property type="match status" value="1"/>
</dbReference>
<dbReference type="Gene3D" id="2.40.50.140">
    <property type="entry name" value="Nucleic acid-binding proteins"/>
    <property type="match status" value="1"/>
</dbReference>
<dbReference type="HAMAP" id="MF_01587">
    <property type="entry name" value="DNA_ligase_B"/>
    <property type="match status" value="1"/>
</dbReference>
<dbReference type="InterPro" id="IPR020923">
    <property type="entry name" value="DNA_ligase_B"/>
</dbReference>
<dbReference type="InterPro" id="IPR033136">
    <property type="entry name" value="DNA_ligase_CS"/>
</dbReference>
<dbReference type="InterPro" id="IPR013839">
    <property type="entry name" value="DNAligase_adenylation"/>
</dbReference>
<dbReference type="InterPro" id="IPR013840">
    <property type="entry name" value="DNAligase_N"/>
</dbReference>
<dbReference type="InterPro" id="IPR012340">
    <property type="entry name" value="NA-bd_OB-fold"/>
</dbReference>
<dbReference type="InterPro" id="IPR050326">
    <property type="entry name" value="NAD_dep_DNA_ligaseB"/>
</dbReference>
<dbReference type="InterPro" id="IPR004150">
    <property type="entry name" value="NAD_DNA_ligase_OB"/>
</dbReference>
<dbReference type="InterPro" id="IPR010994">
    <property type="entry name" value="RuvA_2-like"/>
</dbReference>
<dbReference type="NCBIfam" id="NF005987">
    <property type="entry name" value="PRK08097.1"/>
    <property type="match status" value="1"/>
</dbReference>
<dbReference type="PANTHER" id="PTHR47810">
    <property type="entry name" value="DNA LIGASE"/>
    <property type="match status" value="1"/>
</dbReference>
<dbReference type="PANTHER" id="PTHR47810:SF1">
    <property type="entry name" value="DNA LIGASE B"/>
    <property type="match status" value="1"/>
</dbReference>
<dbReference type="Pfam" id="PF01653">
    <property type="entry name" value="DNA_ligase_aden"/>
    <property type="match status" value="1"/>
</dbReference>
<dbReference type="Pfam" id="PF03120">
    <property type="entry name" value="DNA_ligase_OB"/>
    <property type="match status" value="1"/>
</dbReference>
<dbReference type="SMART" id="SM00532">
    <property type="entry name" value="LIGANc"/>
    <property type="match status" value="1"/>
</dbReference>
<dbReference type="SUPFAM" id="SSF56091">
    <property type="entry name" value="DNA ligase/mRNA capping enzyme, catalytic domain"/>
    <property type="match status" value="1"/>
</dbReference>
<dbReference type="SUPFAM" id="SSF50249">
    <property type="entry name" value="Nucleic acid-binding proteins"/>
    <property type="match status" value="1"/>
</dbReference>
<dbReference type="SUPFAM" id="SSF47781">
    <property type="entry name" value="RuvA domain 2-like"/>
    <property type="match status" value="1"/>
</dbReference>
<dbReference type="PROSITE" id="PS01056">
    <property type="entry name" value="DNA_LIGASE_N2"/>
    <property type="match status" value="1"/>
</dbReference>
<proteinExistence type="inferred from homology"/>
<feature type="chain" id="PRO_0000313544" description="DNA ligase B">
    <location>
        <begin position="1"/>
        <end position="557"/>
    </location>
</feature>
<feature type="active site" description="N6-AMP-lysine intermediate" evidence="1">
    <location>
        <position position="125"/>
    </location>
</feature>
<reference key="1">
    <citation type="journal article" date="2006" name="Nat. Biotechnol.">
        <title>Complete genome sequence of the entomopathogenic and metabolically versatile soil bacterium Pseudomonas entomophila.</title>
        <authorList>
            <person name="Vodovar N."/>
            <person name="Vallenet D."/>
            <person name="Cruveiller S."/>
            <person name="Rouy Z."/>
            <person name="Barbe V."/>
            <person name="Acosta C."/>
            <person name="Cattolico L."/>
            <person name="Jubin C."/>
            <person name="Lajus A."/>
            <person name="Segurens B."/>
            <person name="Vacherie B."/>
            <person name="Wincker P."/>
            <person name="Weissenbach J."/>
            <person name="Lemaitre B."/>
            <person name="Medigue C."/>
            <person name="Boccard F."/>
        </authorList>
    </citation>
    <scope>NUCLEOTIDE SEQUENCE [LARGE SCALE GENOMIC DNA]</scope>
    <source>
        <strain>L48</strain>
    </source>
</reference>
<accession>Q1I3X5</accession>